<sequence length="45" mass="5118">MTQIFLIGRLPEAYAPFDPIVDVLPIIPVLFLLLAFVWQASVSFR</sequence>
<dbReference type="EMBL" id="CR954199">
    <property type="protein sequence ID" value="CAL36381.1"/>
    <property type="molecule type" value="Genomic_DNA"/>
</dbReference>
<dbReference type="RefSeq" id="YP_717259.1">
    <property type="nucleotide sequence ID" value="NC_008289.1"/>
</dbReference>
<dbReference type="SMR" id="Q0P3J6"/>
<dbReference type="FunCoup" id="Q0P3J6">
    <property type="interactions" value="40"/>
</dbReference>
<dbReference type="STRING" id="70448.Q0P3J6"/>
<dbReference type="GeneID" id="4238889"/>
<dbReference type="KEGG" id="ota:OstapCp56"/>
<dbReference type="eggNOG" id="ENOG502SDX2">
    <property type="taxonomic scope" value="Eukaryota"/>
</dbReference>
<dbReference type="InParanoid" id="Q0P3J6"/>
<dbReference type="Proteomes" id="UP000009170">
    <property type="component" value="Chloroplast"/>
</dbReference>
<dbReference type="GO" id="GO:0009535">
    <property type="term" value="C:chloroplast thylakoid membrane"/>
    <property type="evidence" value="ECO:0007669"/>
    <property type="project" value="UniProtKB-SubCell"/>
</dbReference>
<dbReference type="GO" id="GO:0009539">
    <property type="term" value="C:photosystem II reaction center"/>
    <property type="evidence" value="ECO:0007669"/>
    <property type="project" value="InterPro"/>
</dbReference>
<dbReference type="GO" id="GO:0015979">
    <property type="term" value="P:photosynthesis"/>
    <property type="evidence" value="ECO:0007669"/>
    <property type="project" value="UniProtKB-UniRule"/>
</dbReference>
<dbReference type="HAMAP" id="MF_00441">
    <property type="entry name" value="PSII_PsbK"/>
    <property type="match status" value="1"/>
</dbReference>
<dbReference type="InterPro" id="IPR003687">
    <property type="entry name" value="PSII_PsbK"/>
</dbReference>
<dbReference type="InterPro" id="IPR037270">
    <property type="entry name" value="PSII_PsbK_sf"/>
</dbReference>
<dbReference type="NCBIfam" id="NF002715">
    <property type="entry name" value="PRK02553.1"/>
    <property type="match status" value="1"/>
</dbReference>
<dbReference type="PANTHER" id="PTHR35325">
    <property type="match status" value="1"/>
</dbReference>
<dbReference type="PANTHER" id="PTHR35325:SF1">
    <property type="entry name" value="PHOTOSYSTEM II REACTION CENTER PROTEIN K"/>
    <property type="match status" value="1"/>
</dbReference>
<dbReference type="Pfam" id="PF02533">
    <property type="entry name" value="PsbK"/>
    <property type="match status" value="1"/>
</dbReference>
<dbReference type="SUPFAM" id="SSF161037">
    <property type="entry name" value="Photosystem II reaction center protein K, PsbK"/>
    <property type="match status" value="1"/>
</dbReference>
<evidence type="ECO:0000255" key="1">
    <source>
        <dbReference type="HAMAP-Rule" id="MF_00441"/>
    </source>
</evidence>
<proteinExistence type="inferred from homology"/>
<protein>
    <recommendedName>
        <fullName evidence="1">Photosystem II reaction center protein K</fullName>
        <shortName evidence="1">PSII-K</shortName>
    </recommendedName>
</protein>
<organism>
    <name type="scientific">Ostreococcus tauri</name>
    <dbReference type="NCBI Taxonomy" id="70448"/>
    <lineage>
        <taxon>Eukaryota</taxon>
        <taxon>Viridiplantae</taxon>
        <taxon>Chlorophyta</taxon>
        <taxon>Mamiellophyceae</taxon>
        <taxon>Mamiellales</taxon>
        <taxon>Bathycoccaceae</taxon>
        <taxon>Ostreococcus</taxon>
    </lineage>
</organism>
<keyword id="KW-0150">Chloroplast</keyword>
<keyword id="KW-0472">Membrane</keyword>
<keyword id="KW-0602">Photosynthesis</keyword>
<keyword id="KW-0604">Photosystem II</keyword>
<keyword id="KW-0934">Plastid</keyword>
<keyword id="KW-0674">Reaction center</keyword>
<keyword id="KW-1185">Reference proteome</keyword>
<keyword id="KW-0793">Thylakoid</keyword>
<keyword id="KW-0812">Transmembrane</keyword>
<keyword id="KW-1133">Transmembrane helix</keyword>
<accession>Q0P3J6</accession>
<name>PSBK_OSTTA</name>
<gene>
    <name evidence="1" type="primary">psbK</name>
    <name type="ordered locus">OtCpg00560</name>
</gene>
<feature type="propeptide" id="PRO_0000276162" evidence="1">
    <location>
        <begin position="1"/>
        <end position="8"/>
    </location>
</feature>
<feature type="chain" id="PRO_0000276163" description="Photosystem II reaction center protein K" evidence="1">
    <location>
        <begin position="9"/>
        <end position="45"/>
    </location>
</feature>
<feature type="transmembrane region" description="Helical" evidence="1">
    <location>
        <begin position="20"/>
        <end position="40"/>
    </location>
</feature>
<comment type="function">
    <text evidence="1">One of the components of the core complex of photosystem II (PSII). PSII is a light-driven water:plastoquinone oxidoreductase that uses light energy to abstract electrons from H(2)O, generating O(2) and a proton gradient subsequently used for ATP formation. It consists of a core antenna complex that captures photons, and an electron transfer chain that converts photonic excitation into a charge separation.</text>
</comment>
<comment type="subunit">
    <text evidence="1">PSII is composed of 1 copy each of membrane proteins PsbA, PsbB, PsbC, PsbD, PsbE, PsbF, PsbH, PsbI, PsbJ, PsbK, PsbL, PsbM, PsbT, PsbX, PsbY, PsbZ, Psb30/Ycf12, at least 3 peripheral proteins of the oxygen-evolving complex and a large number of cofactors. It forms dimeric complexes.</text>
</comment>
<comment type="subcellular location">
    <subcellularLocation>
        <location evidence="1">Plastid</location>
        <location evidence="1">Chloroplast thylakoid membrane</location>
        <topology evidence="1">Single-pass membrane protein</topology>
    </subcellularLocation>
</comment>
<comment type="similarity">
    <text evidence="1">Belongs to the PsbK family.</text>
</comment>
<geneLocation type="chloroplast"/>
<reference key="1">
    <citation type="journal article" date="2007" name="Mol. Biol. Evol.">
        <title>The complete chloroplast and mitochondrial DNA sequence of Ostreococcus tauri: organelle genomes of the smallest eukaryote are examples of compaction.</title>
        <authorList>
            <person name="Robbens S."/>
            <person name="Derelle E."/>
            <person name="Ferraz C."/>
            <person name="Wuyts J."/>
            <person name="Moreau H."/>
            <person name="Van de Peer Y."/>
        </authorList>
    </citation>
    <scope>NUCLEOTIDE SEQUENCE [LARGE SCALE GENOMIC DNA]</scope>
    <source>
        <strain>OTTH0595</strain>
    </source>
</reference>